<accession>Q2RFX9</accession>
<accession>O05433</accession>
<evidence type="ECO:0000255" key="1">
    <source>
        <dbReference type="HAMAP-Rule" id="MF_01347"/>
    </source>
</evidence>
<evidence type="ECO:0000269" key="2">
    <source>
    </source>
</evidence>
<evidence type="ECO:0000305" key="3"/>
<reference key="1">
    <citation type="journal article" date="1997" name="J. Bacteriol.">
        <title>Composition and primary structure of the F1F0 ATP synthase from the obligately anaerobic bacterium Clostridium thermoaceticum.</title>
        <authorList>
            <person name="Das A."/>
            <person name="Ljungdahl L.G."/>
        </authorList>
    </citation>
    <scope>NUCLEOTIDE SEQUENCE [GENOMIC DNA]</scope>
    <scope>SUBUNIT</scope>
    <scope>OPERON STRUCTURE</scope>
</reference>
<reference key="2">
    <citation type="journal article" date="2008" name="Environ. Microbiol.">
        <title>The complete genome sequence of Moorella thermoacetica (f. Clostridium thermoaceticum).</title>
        <authorList>
            <person name="Pierce E."/>
            <person name="Xie G."/>
            <person name="Barabote R.D."/>
            <person name="Saunders E."/>
            <person name="Han C.S."/>
            <person name="Detter J.C."/>
            <person name="Richardson P."/>
            <person name="Brettin T.S."/>
            <person name="Das A."/>
            <person name="Ljungdahl L.G."/>
            <person name="Ragsdale S.W."/>
        </authorList>
    </citation>
    <scope>NUCLEOTIDE SEQUENCE [LARGE SCALE GENOMIC DNA]</scope>
    <source>
        <strain>ATCC 39073 / JCM 9320</strain>
    </source>
</reference>
<gene>
    <name evidence="1" type="primary">atpD</name>
    <name type="ordered locus">Moth_2378</name>
</gene>
<protein>
    <recommendedName>
        <fullName evidence="1">ATP synthase subunit beta</fullName>
        <ecNumber evidence="1">7.1.2.2</ecNumber>
    </recommendedName>
    <alternativeName>
        <fullName evidence="1">ATP synthase F1 sector subunit beta</fullName>
    </alternativeName>
    <alternativeName>
        <fullName evidence="1">F-ATPase subunit beta</fullName>
    </alternativeName>
</protein>
<dbReference type="EC" id="7.1.2.2" evidence="1"/>
<dbReference type="EMBL" id="U64318">
    <property type="protein sequence ID" value="AAB51466.1"/>
    <property type="molecule type" value="Genomic_DNA"/>
</dbReference>
<dbReference type="EMBL" id="CP000232">
    <property type="protein sequence ID" value="ABC20660.1"/>
    <property type="molecule type" value="Genomic_DNA"/>
</dbReference>
<dbReference type="RefSeq" id="YP_431203.1">
    <property type="nucleotide sequence ID" value="NC_007644.1"/>
</dbReference>
<dbReference type="SMR" id="Q2RFX9"/>
<dbReference type="STRING" id="264732.Moth_2378"/>
<dbReference type="EnsemblBacteria" id="ABC20660">
    <property type="protein sequence ID" value="ABC20660"/>
    <property type="gene ID" value="Moth_2378"/>
</dbReference>
<dbReference type="KEGG" id="mta:Moth_2378"/>
<dbReference type="PATRIC" id="fig|264732.11.peg.2591"/>
<dbReference type="eggNOG" id="COG0055">
    <property type="taxonomic scope" value="Bacteria"/>
</dbReference>
<dbReference type="HOGENOM" id="CLU_022398_0_2_9"/>
<dbReference type="OrthoDB" id="9803053at2"/>
<dbReference type="GO" id="GO:0005886">
    <property type="term" value="C:plasma membrane"/>
    <property type="evidence" value="ECO:0007669"/>
    <property type="project" value="UniProtKB-SubCell"/>
</dbReference>
<dbReference type="GO" id="GO:0045259">
    <property type="term" value="C:proton-transporting ATP synthase complex"/>
    <property type="evidence" value="ECO:0007669"/>
    <property type="project" value="UniProtKB-KW"/>
</dbReference>
<dbReference type="GO" id="GO:0005524">
    <property type="term" value="F:ATP binding"/>
    <property type="evidence" value="ECO:0007669"/>
    <property type="project" value="UniProtKB-UniRule"/>
</dbReference>
<dbReference type="GO" id="GO:0016887">
    <property type="term" value="F:ATP hydrolysis activity"/>
    <property type="evidence" value="ECO:0007669"/>
    <property type="project" value="InterPro"/>
</dbReference>
<dbReference type="GO" id="GO:0046933">
    <property type="term" value="F:proton-transporting ATP synthase activity, rotational mechanism"/>
    <property type="evidence" value="ECO:0007669"/>
    <property type="project" value="UniProtKB-UniRule"/>
</dbReference>
<dbReference type="CDD" id="cd18110">
    <property type="entry name" value="ATP-synt_F1_beta_C"/>
    <property type="match status" value="1"/>
</dbReference>
<dbReference type="CDD" id="cd18115">
    <property type="entry name" value="ATP-synt_F1_beta_N"/>
    <property type="match status" value="1"/>
</dbReference>
<dbReference type="CDD" id="cd01133">
    <property type="entry name" value="F1-ATPase_beta_CD"/>
    <property type="match status" value="1"/>
</dbReference>
<dbReference type="FunFam" id="1.10.1140.10:FF:000001">
    <property type="entry name" value="ATP synthase subunit beta"/>
    <property type="match status" value="1"/>
</dbReference>
<dbReference type="FunFam" id="2.40.10.170:FF:000005">
    <property type="entry name" value="ATP synthase subunit beta"/>
    <property type="match status" value="1"/>
</dbReference>
<dbReference type="FunFam" id="3.40.50.300:FF:000026">
    <property type="entry name" value="ATP synthase subunit beta"/>
    <property type="match status" value="1"/>
</dbReference>
<dbReference type="Gene3D" id="2.40.10.170">
    <property type="match status" value="1"/>
</dbReference>
<dbReference type="Gene3D" id="1.10.1140.10">
    <property type="entry name" value="Bovine Mitochondrial F1-atpase, Atp Synthase Beta Chain, Chain D, domain 3"/>
    <property type="match status" value="1"/>
</dbReference>
<dbReference type="Gene3D" id="3.40.50.300">
    <property type="entry name" value="P-loop containing nucleotide triphosphate hydrolases"/>
    <property type="match status" value="1"/>
</dbReference>
<dbReference type="HAMAP" id="MF_01347">
    <property type="entry name" value="ATP_synth_beta_bact"/>
    <property type="match status" value="1"/>
</dbReference>
<dbReference type="InterPro" id="IPR003593">
    <property type="entry name" value="AAA+_ATPase"/>
</dbReference>
<dbReference type="InterPro" id="IPR055190">
    <property type="entry name" value="ATP-synt_VA_C"/>
</dbReference>
<dbReference type="InterPro" id="IPR005722">
    <property type="entry name" value="ATP_synth_F1_bsu"/>
</dbReference>
<dbReference type="InterPro" id="IPR020003">
    <property type="entry name" value="ATPase_a/bsu_AS"/>
</dbReference>
<dbReference type="InterPro" id="IPR050053">
    <property type="entry name" value="ATPase_alpha/beta_chains"/>
</dbReference>
<dbReference type="InterPro" id="IPR004100">
    <property type="entry name" value="ATPase_F1/V1/A1_a/bsu_N"/>
</dbReference>
<dbReference type="InterPro" id="IPR036121">
    <property type="entry name" value="ATPase_F1/V1/A1_a/bsu_N_sf"/>
</dbReference>
<dbReference type="InterPro" id="IPR000194">
    <property type="entry name" value="ATPase_F1/V1/A1_a/bsu_nucl-bd"/>
</dbReference>
<dbReference type="InterPro" id="IPR024034">
    <property type="entry name" value="ATPase_F1/V1_b/a_C"/>
</dbReference>
<dbReference type="InterPro" id="IPR027417">
    <property type="entry name" value="P-loop_NTPase"/>
</dbReference>
<dbReference type="NCBIfam" id="TIGR01039">
    <property type="entry name" value="atpD"/>
    <property type="match status" value="1"/>
</dbReference>
<dbReference type="PANTHER" id="PTHR15184">
    <property type="entry name" value="ATP SYNTHASE"/>
    <property type="match status" value="1"/>
</dbReference>
<dbReference type="PANTHER" id="PTHR15184:SF71">
    <property type="entry name" value="ATP SYNTHASE SUBUNIT BETA, MITOCHONDRIAL"/>
    <property type="match status" value="1"/>
</dbReference>
<dbReference type="Pfam" id="PF00006">
    <property type="entry name" value="ATP-synt_ab"/>
    <property type="match status" value="1"/>
</dbReference>
<dbReference type="Pfam" id="PF02874">
    <property type="entry name" value="ATP-synt_ab_N"/>
    <property type="match status" value="1"/>
</dbReference>
<dbReference type="Pfam" id="PF22919">
    <property type="entry name" value="ATP-synt_VA_C"/>
    <property type="match status" value="1"/>
</dbReference>
<dbReference type="PIRSF" id="PIRSF039072">
    <property type="entry name" value="ATPase_subunit_beta"/>
    <property type="match status" value="1"/>
</dbReference>
<dbReference type="SMART" id="SM00382">
    <property type="entry name" value="AAA"/>
    <property type="match status" value="1"/>
</dbReference>
<dbReference type="SUPFAM" id="SSF47917">
    <property type="entry name" value="C-terminal domain of alpha and beta subunits of F1 ATP synthase"/>
    <property type="match status" value="1"/>
</dbReference>
<dbReference type="SUPFAM" id="SSF50615">
    <property type="entry name" value="N-terminal domain of alpha and beta subunits of F1 ATP synthase"/>
    <property type="match status" value="1"/>
</dbReference>
<dbReference type="SUPFAM" id="SSF52540">
    <property type="entry name" value="P-loop containing nucleoside triphosphate hydrolases"/>
    <property type="match status" value="1"/>
</dbReference>
<dbReference type="PROSITE" id="PS00152">
    <property type="entry name" value="ATPASE_ALPHA_BETA"/>
    <property type="match status" value="1"/>
</dbReference>
<proteinExistence type="evidence at protein level"/>
<name>ATPB_MOOTA</name>
<feature type="chain" id="PRO_0000254300" description="ATP synthase subunit beta">
    <location>
        <begin position="1"/>
        <end position="462"/>
    </location>
</feature>
<feature type="binding site" evidence="1">
    <location>
        <begin position="150"/>
        <end position="157"/>
    </location>
    <ligand>
        <name>ATP</name>
        <dbReference type="ChEBI" id="CHEBI:30616"/>
    </ligand>
</feature>
<feature type="sequence conflict" description="In Ref. 1; AAB51466." evidence="3" ref="1">
    <original>A</original>
    <variation>P</variation>
    <location>
        <position position="228"/>
    </location>
</feature>
<feature type="sequence conflict" description="In Ref. 1; AAB51466." evidence="3" ref="1">
    <original>AEG</original>
    <variation>PEA</variation>
    <location>
        <begin position="234"/>
        <end position="236"/>
    </location>
</feature>
<feature type="sequence conflict" description="In Ref. 1; AAB51466." evidence="3" ref="1">
    <original>A</original>
    <variation>P</variation>
    <location>
        <position position="252"/>
    </location>
</feature>
<feature type="sequence conflict" description="In Ref. 1; AAB51466." evidence="3" ref="1">
    <original>G</original>
    <variation>A</variation>
    <location>
        <position position="261"/>
    </location>
</feature>
<feature type="sequence conflict" description="In Ref. 1; AAB51466." evidence="3" ref="1">
    <original>A</original>
    <variation>P</variation>
    <location>
        <position position="274"/>
    </location>
</feature>
<feature type="sequence conflict" description="In Ref. 1; AAB51466." evidence="3" ref="1">
    <original>A</original>
    <variation>P</variation>
    <location>
        <position position="279"/>
    </location>
</feature>
<feature type="sequence conflict" description="In Ref. 1; AAB51466." evidence="3" ref="1">
    <original>A</original>
    <variation>V</variation>
    <location>
        <position position="359"/>
    </location>
</feature>
<feature type="sequence conflict" description="In Ref. 1; AAB51466." evidence="3" ref="1">
    <original>E</original>
    <variation>D</variation>
    <location>
        <position position="387"/>
    </location>
</feature>
<keyword id="KW-0066">ATP synthesis</keyword>
<keyword id="KW-0067">ATP-binding</keyword>
<keyword id="KW-1003">Cell membrane</keyword>
<keyword id="KW-0139">CF(1)</keyword>
<keyword id="KW-0375">Hydrogen ion transport</keyword>
<keyword id="KW-0406">Ion transport</keyword>
<keyword id="KW-0472">Membrane</keyword>
<keyword id="KW-0547">Nucleotide-binding</keyword>
<keyword id="KW-1278">Translocase</keyword>
<keyword id="KW-0813">Transport</keyword>
<sequence length="462" mass="50451">MNEGQVVQVIGPVVDVEFASDRLPDLYNAITIKTDKINITMEAMQHLGNNTVRCVALSSTDGLQRGMKAVDTGQPITVPVGRATLGRLFNVLGEPIDNQGPVETTERLPIHRPAPSFEEQQPSTEVLETGIKVVDLLAPYAKGGKIGLFGGAGVGKTVLIMELIRNIAYEHGGFSVFSGVGERTREGNDLYLEMKESGVLEKTALVFGQMNEPPGARLRVGLTGLTMAEYFRDAEGQDVLLFIDNIFRFVQAGSEVSALLGRMPSAVGYQPTLATEMGALQERITSTKKGSITSVQAIYVPADDLTDPAPATTFAHLDATTVLSRQIAELGIYPAVDPLDSTSRILDPRVLGEEHYQVARGVQQVLQRYKELQDIIAILGMDELSEEDKLIVARARKIQRFLSQPFHVAEAFTGQPGVYVPLKETIRGFKEILEGRHDNLPEQAFYMVGTIDEAVKKGQELM</sequence>
<comment type="function">
    <text evidence="1">Produces ATP from ADP in the presence of a proton gradient across the membrane. The catalytic sites are hosted primarily by the beta subunits.</text>
</comment>
<comment type="catalytic activity">
    <reaction evidence="1">
        <text>ATP + H2O + 4 H(+)(in) = ADP + phosphate + 5 H(+)(out)</text>
        <dbReference type="Rhea" id="RHEA:57720"/>
        <dbReference type="ChEBI" id="CHEBI:15377"/>
        <dbReference type="ChEBI" id="CHEBI:15378"/>
        <dbReference type="ChEBI" id="CHEBI:30616"/>
        <dbReference type="ChEBI" id="CHEBI:43474"/>
        <dbReference type="ChEBI" id="CHEBI:456216"/>
        <dbReference type="EC" id="7.1.2.2"/>
    </reaction>
</comment>
<comment type="subunit">
    <text evidence="1 2">F-type ATPases have 2 components, CF(1) - the catalytic core - and CF(0) - the membrane proton channel. CF(1) has five subunits: alpha(3), beta(3), gamma(1), delta(1), epsilon(1). CF(0) has three main subunits: a(1), b(2) and c(9-12). The alpha and beta chains form an alternating ring which encloses part of the gamma chain. CF(1) is attached to CF(0) by a central stalk formed by the gamma and epsilon chains, while a peripheral stalk is formed by the delta and b chains (By similarity). In this bacterium the a and b subunits are transcribed but do not seem to be translated, thus the ATP synthase consists of the alpha, beta, gamma, delta, epsilon and c subunits.</text>
</comment>
<comment type="subcellular location">
    <subcellularLocation>
        <location>Cell membrane</location>
        <topology>Peripheral membrane protein</topology>
    </subcellularLocation>
</comment>
<comment type="similarity">
    <text evidence="1">Belongs to the ATPase alpha/beta chains family.</text>
</comment>
<organism>
    <name type="scientific">Moorella thermoacetica (strain ATCC 39073 / JCM 9320)</name>
    <dbReference type="NCBI Taxonomy" id="264732"/>
    <lineage>
        <taxon>Bacteria</taxon>
        <taxon>Bacillati</taxon>
        <taxon>Bacillota</taxon>
        <taxon>Clostridia</taxon>
        <taxon>Moorellales</taxon>
        <taxon>Moorellaceae</taxon>
        <taxon>Moorella</taxon>
    </lineage>
</organism>